<evidence type="ECO:0000255" key="1">
    <source>
        <dbReference type="HAMAP-Rule" id="MF_00149"/>
    </source>
</evidence>
<protein>
    <recommendedName>
        <fullName evidence="1">DNA mismatch repair protein MutL</fullName>
    </recommendedName>
</protein>
<accession>Q01QW7</accession>
<name>MUTL_SOLUE</name>
<keyword id="KW-0227">DNA damage</keyword>
<keyword id="KW-0234">DNA repair</keyword>
<sequence length="660" mass="73398">MGRIRILPDQVANKIAAGEVVERPASVVKELLENSLDAGATEVRVEVEAGGRRLIRIVDDGFGMLRDDALLAFERHATSKLRDVKDLLSIATLGFRGEALPSIASVSRLLLETRSMEEPTGTRIEIAGGKMLRCEEAALGGGTVITVRDLFYNVPARRKFLRTEPTELAHIASLVTHYSLAHPDKSFRLSTGPTELLGVTPVASMKERVYQVFGSQILDELVEIGVRERDLFLPPPSVPPSQAIAEYRSTEPEDPPFRRFRLTGFFSRPQIQKSNRNSIYIFVNGRLIRDRLVLHALSSAYHNLMPASAYPFALLFLECDAEEVDVNVHPSKTEVRFRHGSFLHDFIRDSIRERLMESRPAPTFSPVPMAAPPAQQGAQLPYSEFSQMLENEQQAASEMAEPAIAGEPAMPEFNLRATAPPTPRLDFSAPPIEVAPGPPPSGKLSRRLDMHGEFPLEAIPAPEMSLSALSDLRPLGQIHESFIIAAGRDGLWIIDQHVAHERILFEQVLKQRAAGRVETQRLLMPMILQLSAEQQIDYARIADELHASGFETEPFGNRTIAVKAAPAAVGPQDLERILFEILEIAENEMRTNSLDDLRRNICASIACRAAIKINMRLDLAKMEWLLRALAATDCPMSCPHGRPIAMHYSTREILKAFHRI</sequence>
<organism>
    <name type="scientific">Solibacter usitatus (strain Ellin6076)</name>
    <dbReference type="NCBI Taxonomy" id="234267"/>
    <lineage>
        <taxon>Bacteria</taxon>
        <taxon>Pseudomonadati</taxon>
        <taxon>Acidobacteriota</taxon>
        <taxon>Terriglobia</taxon>
        <taxon>Bryobacterales</taxon>
        <taxon>Solibacteraceae</taxon>
        <taxon>Candidatus Solibacter</taxon>
    </lineage>
</organism>
<proteinExistence type="inferred from homology"/>
<gene>
    <name evidence="1" type="primary">mutL</name>
    <name type="ordered locus">Acid_7040</name>
</gene>
<reference key="1">
    <citation type="journal article" date="2009" name="Appl. Environ. Microbiol.">
        <title>Three genomes from the phylum Acidobacteria provide insight into the lifestyles of these microorganisms in soils.</title>
        <authorList>
            <person name="Ward N.L."/>
            <person name="Challacombe J.F."/>
            <person name="Janssen P.H."/>
            <person name="Henrissat B."/>
            <person name="Coutinho P.M."/>
            <person name="Wu M."/>
            <person name="Xie G."/>
            <person name="Haft D.H."/>
            <person name="Sait M."/>
            <person name="Badger J."/>
            <person name="Barabote R.D."/>
            <person name="Bradley B."/>
            <person name="Brettin T.S."/>
            <person name="Brinkac L.M."/>
            <person name="Bruce D."/>
            <person name="Creasy T."/>
            <person name="Daugherty S.C."/>
            <person name="Davidsen T.M."/>
            <person name="DeBoy R.T."/>
            <person name="Detter J.C."/>
            <person name="Dodson R.J."/>
            <person name="Durkin A.S."/>
            <person name="Ganapathy A."/>
            <person name="Gwinn-Giglio M."/>
            <person name="Han C.S."/>
            <person name="Khouri H."/>
            <person name="Kiss H."/>
            <person name="Kothari S.P."/>
            <person name="Madupu R."/>
            <person name="Nelson K.E."/>
            <person name="Nelson W.C."/>
            <person name="Paulsen I."/>
            <person name="Penn K."/>
            <person name="Ren Q."/>
            <person name="Rosovitz M.J."/>
            <person name="Selengut J.D."/>
            <person name="Shrivastava S."/>
            <person name="Sullivan S.A."/>
            <person name="Tapia R."/>
            <person name="Thompson L.S."/>
            <person name="Watkins K.L."/>
            <person name="Yang Q."/>
            <person name="Yu C."/>
            <person name="Zafar N."/>
            <person name="Zhou L."/>
            <person name="Kuske C.R."/>
        </authorList>
    </citation>
    <scope>NUCLEOTIDE SEQUENCE [LARGE SCALE GENOMIC DNA]</scope>
    <source>
        <strain>Ellin6076</strain>
    </source>
</reference>
<feature type="chain" id="PRO_1000076721" description="DNA mismatch repair protein MutL">
    <location>
        <begin position="1"/>
        <end position="660"/>
    </location>
</feature>
<comment type="function">
    <text evidence="1">This protein is involved in the repair of mismatches in DNA. It is required for dam-dependent methyl-directed DNA mismatch repair. May act as a 'molecular matchmaker', a protein that promotes the formation of a stable complex between two or more DNA-binding proteins in an ATP-dependent manner without itself being part of a final effector complex.</text>
</comment>
<comment type="similarity">
    <text evidence="1">Belongs to the DNA mismatch repair MutL/HexB family.</text>
</comment>
<dbReference type="EMBL" id="CP000473">
    <property type="protein sequence ID" value="ABJ87953.1"/>
    <property type="molecule type" value="Genomic_DNA"/>
</dbReference>
<dbReference type="SMR" id="Q01QW7"/>
<dbReference type="FunCoup" id="Q01QW7">
    <property type="interactions" value="272"/>
</dbReference>
<dbReference type="STRING" id="234267.Acid_7040"/>
<dbReference type="KEGG" id="sus:Acid_7040"/>
<dbReference type="eggNOG" id="COG0323">
    <property type="taxonomic scope" value="Bacteria"/>
</dbReference>
<dbReference type="HOGENOM" id="CLU_004131_4_2_0"/>
<dbReference type="InParanoid" id="Q01QW7"/>
<dbReference type="OrthoDB" id="9763467at2"/>
<dbReference type="GO" id="GO:0032300">
    <property type="term" value="C:mismatch repair complex"/>
    <property type="evidence" value="ECO:0007669"/>
    <property type="project" value="InterPro"/>
</dbReference>
<dbReference type="GO" id="GO:0005524">
    <property type="term" value="F:ATP binding"/>
    <property type="evidence" value="ECO:0007669"/>
    <property type="project" value="InterPro"/>
</dbReference>
<dbReference type="GO" id="GO:0016887">
    <property type="term" value="F:ATP hydrolysis activity"/>
    <property type="evidence" value="ECO:0007669"/>
    <property type="project" value="InterPro"/>
</dbReference>
<dbReference type="GO" id="GO:0140664">
    <property type="term" value="F:ATP-dependent DNA damage sensor activity"/>
    <property type="evidence" value="ECO:0007669"/>
    <property type="project" value="InterPro"/>
</dbReference>
<dbReference type="GO" id="GO:0030983">
    <property type="term" value="F:mismatched DNA binding"/>
    <property type="evidence" value="ECO:0007669"/>
    <property type="project" value="InterPro"/>
</dbReference>
<dbReference type="GO" id="GO:0006298">
    <property type="term" value="P:mismatch repair"/>
    <property type="evidence" value="ECO:0007669"/>
    <property type="project" value="UniProtKB-UniRule"/>
</dbReference>
<dbReference type="CDD" id="cd16926">
    <property type="entry name" value="HATPase_MutL-MLH-PMS-like"/>
    <property type="match status" value="1"/>
</dbReference>
<dbReference type="CDD" id="cd00782">
    <property type="entry name" value="MutL_Trans"/>
    <property type="match status" value="1"/>
</dbReference>
<dbReference type="FunFam" id="3.30.565.10:FF:000003">
    <property type="entry name" value="DNA mismatch repair endonuclease MutL"/>
    <property type="match status" value="1"/>
</dbReference>
<dbReference type="Gene3D" id="3.30.230.10">
    <property type="match status" value="1"/>
</dbReference>
<dbReference type="Gene3D" id="3.30.565.10">
    <property type="entry name" value="Histidine kinase-like ATPase, C-terminal domain"/>
    <property type="match status" value="1"/>
</dbReference>
<dbReference type="Gene3D" id="3.30.1540.20">
    <property type="entry name" value="MutL, C-terminal domain, dimerisation subdomain"/>
    <property type="match status" value="1"/>
</dbReference>
<dbReference type="Gene3D" id="3.30.1370.100">
    <property type="entry name" value="MutL, C-terminal domain, regulatory subdomain"/>
    <property type="match status" value="1"/>
</dbReference>
<dbReference type="HAMAP" id="MF_00149">
    <property type="entry name" value="DNA_mis_repair"/>
    <property type="match status" value="1"/>
</dbReference>
<dbReference type="InterPro" id="IPR014762">
    <property type="entry name" value="DNA_mismatch_repair_CS"/>
</dbReference>
<dbReference type="InterPro" id="IPR020667">
    <property type="entry name" value="DNA_mismatch_repair_MutL"/>
</dbReference>
<dbReference type="InterPro" id="IPR013507">
    <property type="entry name" value="DNA_mismatch_S5_2-like"/>
</dbReference>
<dbReference type="InterPro" id="IPR036890">
    <property type="entry name" value="HATPase_C_sf"/>
</dbReference>
<dbReference type="InterPro" id="IPR002099">
    <property type="entry name" value="MutL/Mlh/PMS"/>
</dbReference>
<dbReference type="InterPro" id="IPR038973">
    <property type="entry name" value="MutL/Mlh/Pms-like"/>
</dbReference>
<dbReference type="InterPro" id="IPR014790">
    <property type="entry name" value="MutL_C"/>
</dbReference>
<dbReference type="InterPro" id="IPR042120">
    <property type="entry name" value="MutL_C_dimsub"/>
</dbReference>
<dbReference type="InterPro" id="IPR042121">
    <property type="entry name" value="MutL_C_regsub"/>
</dbReference>
<dbReference type="InterPro" id="IPR037198">
    <property type="entry name" value="MutL_C_sf"/>
</dbReference>
<dbReference type="InterPro" id="IPR020568">
    <property type="entry name" value="Ribosomal_Su5_D2-typ_SF"/>
</dbReference>
<dbReference type="InterPro" id="IPR014721">
    <property type="entry name" value="Ribsml_uS5_D2-typ_fold_subgr"/>
</dbReference>
<dbReference type="NCBIfam" id="TIGR00585">
    <property type="entry name" value="mutl"/>
    <property type="match status" value="1"/>
</dbReference>
<dbReference type="PANTHER" id="PTHR10073">
    <property type="entry name" value="DNA MISMATCH REPAIR PROTEIN MLH, PMS, MUTL"/>
    <property type="match status" value="1"/>
</dbReference>
<dbReference type="PANTHER" id="PTHR10073:SF12">
    <property type="entry name" value="DNA MISMATCH REPAIR PROTEIN MLH1"/>
    <property type="match status" value="1"/>
</dbReference>
<dbReference type="Pfam" id="PF01119">
    <property type="entry name" value="DNA_mis_repair"/>
    <property type="match status" value="1"/>
</dbReference>
<dbReference type="Pfam" id="PF13589">
    <property type="entry name" value="HATPase_c_3"/>
    <property type="match status" value="1"/>
</dbReference>
<dbReference type="Pfam" id="PF08676">
    <property type="entry name" value="MutL_C"/>
    <property type="match status" value="1"/>
</dbReference>
<dbReference type="SMART" id="SM01340">
    <property type="entry name" value="DNA_mis_repair"/>
    <property type="match status" value="1"/>
</dbReference>
<dbReference type="SMART" id="SM00853">
    <property type="entry name" value="MutL_C"/>
    <property type="match status" value="1"/>
</dbReference>
<dbReference type="SUPFAM" id="SSF55874">
    <property type="entry name" value="ATPase domain of HSP90 chaperone/DNA topoisomerase II/histidine kinase"/>
    <property type="match status" value="1"/>
</dbReference>
<dbReference type="SUPFAM" id="SSF118116">
    <property type="entry name" value="DNA mismatch repair protein MutL"/>
    <property type="match status" value="1"/>
</dbReference>
<dbReference type="SUPFAM" id="SSF54211">
    <property type="entry name" value="Ribosomal protein S5 domain 2-like"/>
    <property type="match status" value="1"/>
</dbReference>
<dbReference type="PROSITE" id="PS00058">
    <property type="entry name" value="DNA_MISMATCH_REPAIR_1"/>
    <property type="match status" value="1"/>
</dbReference>